<gene>
    <name type="primary">ccnq</name>
    <name type="synonym">fam58a</name>
</gene>
<comment type="function">
    <text evidence="1">May be an activating cyclin for the cyclin-associated kinase CDK10.</text>
</comment>
<comment type="similarity">
    <text evidence="2">Belongs to the cyclin family. Cyclin-like FAM58 subfamily.</text>
</comment>
<comment type="sequence caution" evidence="2">
    <conflict type="erroneous initiation">
        <sequence resource="EMBL-CDS" id="AAH70740"/>
    </conflict>
</comment>
<evidence type="ECO:0000250" key="1"/>
<evidence type="ECO:0000305" key="2"/>
<protein>
    <recommendedName>
        <fullName>Cyclin-Q</fullName>
    </recommendedName>
    <alternativeName>
        <fullName>Cyclin-related protein FAM58A</fullName>
    </alternativeName>
</protein>
<accession>Q6NRK9</accession>
<sequence>MEIGKNNMDTCNMASSDKDVKIHFKVARFIMEAGVKLGMHSVPIATACTIYHKFYKETSLENYDPHLVAMSAIYLAGKVEEQHLRTRDIINVCHRYNNPGSEPLEVDSKFWELRDNIVHCELLMLRMLNFRVSFQHPHKYLLHYLISLKNWMNRHSWERTPIATAAWALLRDSYHGDLCLRYEPQQIAVAVLYFALQCYGVEVPSNSNAETSWWQVFSEDITILTINNIISDLIHIYTMDTEIV</sequence>
<proteinExistence type="evidence at transcript level"/>
<feature type="chain" id="PRO_0000297571" description="Cyclin-Q">
    <location>
        <begin position="1"/>
        <end position="244"/>
    </location>
</feature>
<name>CCNQ_XENLA</name>
<keyword id="KW-0195">Cyclin</keyword>
<keyword id="KW-1185">Reference proteome</keyword>
<dbReference type="EMBL" id="BC070740">
    <property type="protein sequence ID" value="AAH70740.1"/>
    <property type="status" value="ALT_INIT"/>
    <property type="molecule type" value="mRNA"/>
</dbReference>
<dbReference type="RefSeq" id="NP_001084914.2">
    <property type="nucleotide sequence ID" value="NM_001091445.1"/>
</dbReference>
<dbReference type="SMR" id="Q6NRK9"/>
<dbReference type="DNASU" id="431966"/>
<dbReference type="GeneID" id="431966"/>
<dbReference type="KEGG" id="xla:431966"/>
<dbReference type="AGR" id="Xenbase:XB-GENE-6251548"/>
<dbReference type="CTD" id="431966"/>
<dbReference type="Xenbase" id="XB-GENE-6251548">
    <property type="gene designation" value="ccnq.S"/>
</dbReference>
<dbReference type="OMA" id="MYDMMKY"/>
<dbReference type="OrthoDB" id="79090at2759"/>
<dbReference type="Proteomes" id="UP000186698">
    <property type="component" value="Chromosome 8S"/>
</dbReference>
<dbReference type="Bgee" id="431966">
    <property type="expression patterns" value="Expressed in egg cell and 19 other cell types or tissues"/>
</dbReference>
<dbReference type="GO" id="GO:0005634">
    <property type="term" value="C:nucleus"/>
    <property type="evidence" value="ECO:0000318"/>
    <property type="project" value="GO_Central"/>
</dbReference>
<dbReference type="GO" id="GO:0016538">
    <property type="term" value="F:cyclin-dependent protein serine/threonine kinase regulator activity"/>
    <property type="evidence" value="ECO:0000318"/>
    <property type="project" value="GO_Central"/>
</dbReference>
<dbReference type="GO" id="GO:0006357">
    <property type="term" value="P:regulation of transcription by RNA polymerase II"/>
    <property type="evidence" value="ECO:0007669"/>
    <property type="project" value="InterPro"/>
</dbReference>
<dbReference type="CDD" id="cd20534">
    <property type="entry name" value="CYCLIN_CCNM_CCNQ_rpt1"/>
    <property type="match status" value="1"/>
</dbReference>
<dbReference type="CDD" id="cd20535">
    <property type="entry name" value="CYCLIN_CCNM_CCNQ_rpt2"/>
    <property type="match status" value="1"/>
</dbReference>
<dbReference type="FunFam" id="1.10.472.10:FF:000179">
    <property type="entry name" value="Cyclin Q"/>
    <property type="match status" value="1"/>
</dbReference>
<dbReference type="FunFam" id="1.10.472.10:FF:000042">
    <property type="entry name" value="FAM58A isoform 1"/>
    <property type="match status" value="1"/>
</dbReference>
<dbReference type="Gene3D" id="1.10.472.10">
    <property type="entry name" value="Cyclin-like"/>
    <property type="match status" value="2"/>
</dbReference>
<dbReference type="InterPro" id="IPR013763">
    <property type="entry name" value="Cyclin-like_dom"/>
</dbReference>
<dbReference type="InterPro" id="IPR036915">
    <property type="entry name" value="Cyclin-like_sf"/>
</dbReference>
<dbReference type="InterPro" id="IPR048055">
    <property type="entry name" value="Cyclin-Q_first_cyclin_box"/>
</dbReference>
<dbReference type="InterPro" id="IPR048053">
    <property type="entry name" value="Cyclin-Q_second_cyclin_box"/>
</dbReference>
<dbReference type="InterPro" id="IPR043198">
    <property type="entry name" value="Cyclin/Ssn8"/>
</dbReference>
<dbReference type="InterPro" id="IPR006671">
    <property type="entry name" value="Cyclin_N"/>
</dbReference>
<dbReference type="PANTHER" id="PTHR10026">
    <property type="entry name" value="CYCLIN"/>
    <property type="match status" value="1"/>
</dbReference>
<dbReference type="Pfam" id="PF00134">
    <property type="entry name" value="Cyclin_N"/>
    <property type="match status" value="1"/>
</dbReference>
<dbReference type="PIRSF" id="PIRSF028758">
    <property type="entry name" value="Cyclin, C/H/G types"/>
    <property type="match status" value="1"/>
</dbReference>
<dbReference type="SMART" id="SM00385">
    <property type="entry name" value="CYCLIN"/>
    <property type="match status" value="1"/>
</dbReference>
<dbReference type="SUPFAM" id="SSF47954">
    <property type="entry name" value="Cyclin-like"/>
    <property type="match status" value="2"/>
</dbReference>
<reference key="1">
    <citation type="submission" date="2004-05" db="EMBL/GenBank/DDBJ databases">
        <authorList>
            <consortium name="NIH - Xenopus Gene Collection (XGC) project"/>
        </authorList>
    </citation>
    <scope>NUCLEOTIDE SEQUENCE [LARGE SCALE MRNA]</scope>
    <source>
        <tissue>Oocyte</tissue>
    </source>
</reference>
<organism>
    <name type="scientific">Xenopus laevis</name>
    <name type="common">African clawed frog</name>
    <dbReference type="NCBI Taxonomy" id="8355"/>
    <lineage>
        <taxon>Eukaryota</taxon>
        <taxon>Metazoa</taxon>
        <taxon>Chordata</taxon>
        <taxon>Craniata</taxon>
        <taxon>Vertebrata</taxon>
        <taxon>Euteleostomi</taxon>
        <taxon>Amphibia</taxon>
        <taxon>Batrachia</taxon>
        <taxon>Anura</taxon>
        <taxon>Pipoidea</taxon>
        <taxon>Pipidae</taxon>
        <taxon>Xenopodinae</taxon>
        <taxon>Xenopus</taxon>
        <taxon>Xenopus</taxon>
    </lineage>
</organism>